<accession>Q58DT0</accession>
<gene>
    <name type="primary">ELF5</name>
</gene>
<reference key="1">
    <citation type="journal article" date="2005" name="BMC Genomics">
        <title>Characterization of 954 bovine full-CDS cDNA sequences.</title>
        <authorList>
            <person name="Harhay G.P."/>
            <person name="Sonstegard T.S."/>
            <person name="Keele J.W."/>
            <person name="Heaton M.P."/>
            <person name="Clawson M.L."/>
            <person name="Snelling W.M."/>
            <person name="Wiedmann R.T."/>
            <person name="Van Tassell C.P."/>
            <person name="Smith T.P.L."/>
        </authorList>
    </citation>
    <scope>NUCLEOTIDE SEQUENCE [LARGE SCALE MRNA]</scope>
</reference>
<organism>
    <name type="scientific">Bos taurus</name>
    <name type="common">Bovine</name>
    <dbReference type="NCBI Taxonomy" id="9913"/>
    <lineage>
        <taxon>Eukaryota</taxon>
        <taxon>Metazoa</taxon>
        <taxon>Chordata</taxon>
        <taxon>Craniata</taxon>
        <taxon>Vertebrata</taxon>
        <taxon>Euteleostomi</taxon>
        <taxon>Mammalia</taxon>
        <taxon>Eutheria</taxon>
        <taxon>Laurasiatheria</taxon>
        <taxon>Artiodactyla</taxon>
        <taxon>Ruminantia</taxon>
        <taxon>Pecora</taxon>
        <taxon>Bovidae</taxon>
        <taxon>Bovinae</taxon>
        <taxon>Bos</taxon>
    </lineage>
</organism>
<keyword id="KW-0010">Activator</keyword>
<keyword id="KW-0238">DNA-binding</keyword>
<keyword id="KW-0539">Nucleus</keyword>
<keyword id="KW-1185">Reference proteome</keyword>
<keyword id="KW-0804">Transcription</keyword>
<keyword id="KW-0805">Transcription regulation</keyword>
<protein>
    <recommendedName>
        <fullName>ETS-related transcription factor Elf-5</fullName>
    </recommendedName>
    <alternativeName>
        <fullName>E74-like factor 5</fullName>
    </alternativeName>
</protein>
<name>ELF5_BOVIN</name>
<dbReference type="EMBL" id="BT021517">
    <property type="protein sequence ID" value="AAX46364.1"/>
    <property type="molecule type" value="mRNA"/>
</dbReference>
<dbReference type="RefSeq" id="NP_001019740.1">
    <property type="nucleotide sequence ID" value="NM_001024569.1"/>
</dbReference>
<dbReference type="RefSeq" id="XP_005216443.1">
    <property type="nucleotide sequence ID" value="XM_005216386.4"/>
</dbReference>
<dbReference type="RefSeq" id="XP_015330338.1">
    <property type="nucleotide sequence ID" value="XM_015474852.1"/>
</dbReference>
<dbReference type="RefSeq" id="XP_015330339.1">
    <property type="nucleotide sequence ID" value="XM_015474853.1"/>
</dbReference>
<dbReference type="SMR" id="Q58DT0"/>
<dbReference type="FunCoup" id="Q58DT0">
    <property type="interactions" value="111"/>
</dbReference>
<dbReference type="STRING" id="9913.ENSBTAP00000063479"/>
<dbReference type="PaxDb" id="9913-ENSBTAP00000016534"/>
<dbReference type="Ensembl" id="ENSBTAT00000016534.5">
    <property type="protein sequence ID" value="ENSBTAP00000016534.3"/>
    <property type="gene ID" value="ENSBTAG00000012460.5"/>
</dbReference>
<dbReference type="GeneID" id="539420"/>
<dbReference type="KEGG" id="bta:539420"/>
<dbReference type="CTD" id="2001"/>
<dbReference type="VEuPathDB" id="HostDB:ENSBTAG00000012460"/>
<dbReference type="VGNC" id="VGNC:28430">
    <property type="gene designation" value="ELF5"/>
</dbReference>
<dbReference type="eggNOG" id="KOG3804">
    <property type="taxonomic scope" value="Eukaryota"/>
</dbReference>
<dbReference type="GeneTree" id="ENSGT00940000160980"/>
<dbReference type="HOGENOM" id="CLU_048172_1_0_1"/>
<dbReference type="InParanoid" id="Q58DT0"/>
<dbReference type="OMA" id="MSWTELF"/>
<dbReference type="OrthoDB" id="5961210at2759"/>
<dbReference type="TreeFam" id="TF318679"/>
<dbReference type="Proteomes" id="UP000009136">
    <property type="component" value="Chromosome 15"/>
</dbReference>
<dbReference type="Bgee" id="ENSBTAG00000012460">
    <property type="expression patterns" value="Expressed in mammary gland and 70 other cell types or tissues"/>
</dbReference>
<dbReference type="GO" id="GO:0005634">
    <property type="term" value="C:nucleus"/>
    <property type="evidence" value="ECO:0000318"/>
    <property type="project" value="GO_Central"/>
</dbReference>
<dbReference type="GO" id="GO:0000981">
    <property type="term" value="F:DNA-binding transcription factor activity, RNA polymerase II-specific"/>
    <property type="evidence" value="ECO:0000318"/>
    <property type="project" value="GO_Central"/>
</dbReference>
<dbReference type="GO" id="GO:0043565">
    <property type="term" value="F:sequence-specific DNA binding"/>
    <property type="evidence" value="ECO:0007669"/>
    <property type="project" value="InterPro"/>
</dbReference>
<dbReference type="GO" id="GO:0030154">
    <property type="term" value="P:cell differentiation"/>
    <property type="evidence" value="ECO:0000318"/>
    <property type="project" value="GO_Central"/>
</dbReference>
<dbReference type="GO" id="GO:0006357">
    <property type="term" value="P:regulation of transcription by RNA polymerase II"/>
    <property type="evidence" value="ECO:0000318"/>
    <property type="project" value="GO_Central"/>
</dbReference>
<dbReference type="FunFam" id="1.10.150.50:FF:000026">
    <property type="entry name" value="ETS homologous factor isoform X1"/>
    <property type="match status" value="1"/>
</dbReference>
<dbReference type="FunFam" id="1.10.10.10:FF:000244">
    <property type="entry name" value="ETS-related transcription factor Elf-5 isoform X1"/>
    <property type="match status" value="1"/>
</dbReference>
<dbReference type="Gene3D" id="1.10.150.50">
    <property type="entry name" value="Transcription Factor, Ets-1"/>
    <property type="match status" value="1"/>
</dbReference>
<dbReference type="Gene3D" id="1.10.10.10">
    <property type="entry name" value="Winged helix-like DNA-binding domain superfamily/Winged helix DNA-binding domain"/>
    <property type="match status" value="1"/>
</dbReference>
<dbReference type="InterPro" id="IPR000418">
    <property type="entry name" value="Ets_dom"/>
</dbReference>
<dbReference type="InterPro" id="IPR046328">
    <property type="entry name" value="ETS_fam"/>
</dbReference>
<dbReference type="InterPro" id="IPR003118">
    <property type="entry name" value="Pointed_dom"/>
</dbReference>
<dbReference type="InterPro" id="IPR013761">
    <property type="entry name" value="SAM/pointed_sf"/>
</dbReference>
<dbReference type="InterPro" id="IPR036388">
    <property type="entry name" value="WH-like_DNA-bd_sf"/>
</dbReference>
<dbReference type="InterPro" id="IPR036390">
    <property type="entry name" value="WH_DNA-bd_sf"/>
</dbReference>
<dbReference type="PANTHER" id="PTHR11849">
    <property type="entry name" value="ETS"/>
    <property type="match status" value="1"/>
</dbReference>
<dbReference type="PANTHER" id="PTHR11849:SF15">
    <property type="entry name" value="ETS-RELATED TRANSCRIPTION FACTOR ELF-5"/>
    <property type="match status" value="1"/>
</dbReference>
<dbReference type="Pfam" id="PF00178">
    <property type="entry name" value="Ets"/>
    <property type="match status" value="1"/>
</dbReference>
<dbReference type="Pfam" id="PF02198">
    <property type="entry name" value="SAM_PNT"/>
    <property type="match status" value="1"/>
</dbReference>
<dbReference type="PRINTS" id="PR00454">
    <property type="entry name" value="ETSDOMAIN"/>
</dbReference>
<dbReference type="SMART" id="SM00413">
    <property type="entry name" value="ETS"/>
    <property type="match status" value="1"/>
</dbReference>
<dbReference type="SMART" id="SM00251">
    <property type="entry name" value="SAM_PNT"/>
    <property type="match status" value="1"/>
</dbReference>
<dbReference type="SUPFAM" id="SSF47769">
    <property type="entry name" value="SAM/Pointed domain"/>
    <property type="match status" value="1"/>
</dbReference>
<dbReference type="SUPFAM" id="SSF46785">
    <property type="entry name" value="Winged helix' DNA-binding domain"/>
    <property type="match status" value="1"/>
</dbReference>
<dbReference type="PROSITE" id="PS00346">
    <property type="entry name" value="ETS_DOMAIN_2"/>
    <property type="match status" value="1"/>
</dbReference>
<dbReference type="PROSITE" id="PS50061">
    <property type="entry name" value="ETS_DOMAIN_3"/>
    <property type="match status" value="1"/>
</dbReference>
<dbReference type="PROSITE" id="PS51433">
    <property type="entry name" value="PNT"/>
    <property type="match status" value="1"/>
</dbReference>
<sequence length="255" mass="30090">MLDSVTHSTFLPNTSFCDPLMSWTDLFSNEEYYPAFEHQTACDSYWTSVHPEYWTKRHVWEWLQFCCDQYKLDANCISFCHFNISGLQLCGMTQEEFMEAAGVCGEYLYFILQSIRSQGYSFFNDPDETKATLKDYADSSCLKTSGIKSQDCHSHSRTSLQSSHLWEFVRDLLLSPEENCGILEWEDREQGIFRVVKSEALAKMWGQRKKNDRMTYEKLSRALRYYYKTGILERVDRRLVYKFGKNAHGWQEDKL</sequence>
<evidence type="ECO:0000250" key="1"/>
<evidence type="ECO:0000255" key="2">
    <source>
        <dbReference type="PROSITE-ProRule" id="PRU00237"/>
    </source>
</evidence>
<evidence type="ECO:0000255" key="3">
    <source>
        <dbReference type="PROSITE-ProRule" id="PRU00762"/>
    </source>
</evidence>
<evidence type="ECO:0000305" key="4"/>
<feature type="chain" id="PRO_0000204091" description="ETS-related transcription factor Elf-5">
    <location>
        <begin position="1"/>
        <end position="255"/>
    </location>
</feature>
<feature type="domain" description="PNT" evidence="3">
    <location>
        <begin position="33"/>
        <end position="119"/>
    </location>
</feature>
<feature type="DNA-binding region" description="ETS" evidence="2">
    <location>
        <begin position="163"/>
        <end position="244"/>
    </location>
</feature>
<proteinExistence type="evidence at transcript level"/>
<comment type="function">
    <text evidence="1">Transcriptionally activator that may play a role in regulating the later stages of keratinocytes terminal differentiation. Binds to DNA sequences containing the consensus nucleotide core sequence GGA[AT] (By similarity).</text>
</comment>
<comment type="subcellular location">
    <subcellularLocation>
        <location evidence="2">Nucleus</location>
    </subcellularLocation>
</comment>
<comment type="domain">
    <text evidence="1">The PNT domain acts as a transcriptional activator.</text>
</comment>
<comment type="similarity">
    <text evidence="4">Belongs to the ETS family.</text>
</comment>